<evidence type="ECO:0000255" key="1">
    <source>
        <dbReference type="HAMAP-Rule" id="MF_00116"/>
    </source>
</evidence>
<keyword id="KW-0378">Hydrolase</keyword>
<keyword id="KW-0460">Magnesium</keyword>
<keyword id="KW-0479">Metal-binding</keyword>
<keyword id="KW-0546">Nucleotide metabolism</keyword>
<sequence length="148" mass="15802">MKLDLKILDARMRDYLPKYATTGSAGLDLRACLDAPVTLKPGDTALVPTGLAIHLADPGYAALILPRSGLGHKHGIVLGNLVGLIDSDYQGELMISTWNRGQTEFALNPFERLAQLVIVPVVQARFNLVDDFAQSERGAGGFGSTGRG</sequence>
<proteinExistence type="inferred from homology"/>
<comment type="function">
    <text evidence="1">This enzyme is involved in nucleotide metabolism: it produces dUMP, the immediate precursor of thymidine nucleotides and it decreases the intracellular concentration of dUTP so that uracil cannot be incorporated into DNA.</text>
</comment>
<comment type="catalytic activity">
    <reaction evidence="1">
        <text>dUTP + H2O = dUMP + diphosphate + H(+)</text>
        <dbReference type="Rhea" id="RHEA:10248"/>
        <dbReference type="ChEBI" id="CHEBI:15377"/>
        <dbReference type="ChEBI" id="CHEBI:15378"/>
        <dbReference type="ChEBI" id="CHEBI:33019"/>
        <dbReference type="ChEBI" id="CHEBI:61555"/>
        <dbReference type="ChEBI" id="CHEBI:246422"/>
        <dbReference type="EC" id="3.6.1.23"/>
    </reaction>
</comment>
<comment type="cofactor">
    <cofactor evidence="1">
        <name>Mg(2+)</name>
        <dbReference type="ChEBI" id="CHEBI:18420"/>
    </cofactor>
</comment>
<comment type="pathway">
    <text evidence="1">Pyrimidine metabolism; dUMP biosynthesis; dUMP from dCTP (dUTP route): step 2/2.</text>
</comment>
<comment type="similarity">
    <text evidence="1">Belongs to the dUTPase family.</text>
</comment>
<protein>
    <recommendedName>
        <fullName evidence="1">Deoxyuridine 5'-triphosphate nucleotidohydrolase</fullName>
        <shortName evidence="1">dUTPase</shortName>
        <ecNumber evidence="1">3.6.1.23</ecNumber>
    </recommendedName>
    <alternativeName>
        <fullName evidence="1">dUTP pyrophosphatase</fullName>
    </alternativeName>
</protein>
<dbReference type="EC" id="3.6.1.23" evidence="1"/>
<dbReference type="EMBL" id="CP000124">
    <property type="protein sequence ID" value="ABA49659.1"/>
    <property type="molecule type" value="Genomic_DNA"/>
</dbReference>
<dbReference type="RefSeq" id="WP_004186718.1">
    <property type="nucleotide sequence ID" value="NC_007434.1"/>
</dbReference>
<dbReference type="SMR" id="Q3JV72"/>
<dbReference type="EnsemblBacteria" id="ABA49659">
    <property type="protein sequence ID" value="ABA49659"/>
    <property type="gene ID" value="BURPS1710b_1119"/>
</dbReference>
<dbReference type="GeneID" id="93059416"/>
<dbReference type="KEGG" id="bpm:BURPS1710b_1119"/>
<dbReference type="HOGENOM" id="CLU_068508_1_1_4"/>
<dbReference type="UniPathway" id="UPA00610">
    <property type="reaction ID" value="UER00666"/>
</dbReference>
<dbReference type="Proteomes" id="UP000002700">
    <property type="component" value="Chromosome I"/>
</dbReference>
<dbReference type="GO" id="GO:0004170">
    <property type="term" value="F:dUTP diphosphatase activity"/>
    <property type="evidence" value="ECO:0007669"/>
    <property type="project" value="UniProtKB-UniRule"/>
</dbReference>
<dbReference type="GO" id="GO:0000287">
    <property type="term" value="F:magnesium ion binding"/>
    <property type="evidence" value="ECO:0007669"/>
    <property type="project" value="UniProtKB-UniRule"/>
</dbReference>
<dbReference type="GO" id="GO:0006226">
    <property type="term" value="P:dUMP biosynthetic process"/>
    <property type="evidence" value="ECO:0007669"/>
    <property type="project" value="UniProtKB-UniRule"/>
</dbReference>
<dbReference type="GO" id="GO:0046081">
    <property type="term" value="P:dUTP catabolic process"/>
    <property type="evidence" value="ECO:0007669"/>
    <property type="project" value="InterPro"/>
</dbReference>
<dbReference type="CDD" id="cd07557">
    <property type="entry name" value="trimeric_dUTPase"/>
    <property type="match status" value="1"/>
</dbReference>
<dbReference type="FunFam" id="2.70.40.10:FF:000002">
    <property type="entry name" value="dUTP diphosphatase"/>
    <property type="match status" value="1"/>
</dbReference>
<dbReference type="Gene3D" id="2.70.40.10">
    <property type="match status" value="1"/>
</dbReference>
<dbReference type="HAMAP" id="MF_00116">
    <property type="entry name" value="dUTPase_bact"/>
    <property type="match status" value="1"/>
</dbReference>
<dbReference type="InterPro" id="IPR008181">
    <property type="entry name" value="dUTPase"/>
</dbReference>
<dbReference type="InterPro" id="IPR029054">
    <property type="entry name" value="dUTPase-like"/>
</dbReference>
<dbReference type="InterPro" id="IPR036157">
    <property type="entry name" value="dUTPase-like_sf"/>
</dbReference>
<dbReference type="InterPro" id="IPR033704">
    <property type="entry name" value="dUTPase_trimeric"/>
</dbReference>
<dbReference type="NCBIfam" id="TIGR00576">
    <property type="entry name" value="dut"/>
    <property type="match status" value="1"/>
</dbReference>
<dbReference type="NCBIfam" id="NF001862">
    <property type="entry name" value="PRK00601.1"/>
    <property type="match status" value="1"/>
</dbReference>
<dbReference type="PANTHER" id="PTHR11241">
    <property type="entry name" value="DEOXYURIDINE 5'-TRIPHOSPHATE NUCLEOTIDOHYDROLASE"/>
    <property type="match status" value="1"/>
</dbReference>
<dbReference type="PANTHER" id="PTHR11241:SF0">
    <property type="entry name" value="DEOXYURIDINE 5'-TRIPHOSPHATE NUCLEOTIDOHYDROLASE"/>
    <property type="match status" value="1"/>
</dbReference>
<dbReference type="Pfam" id="PF00692">
    <property type="entry name" value="dUTPase"/>
    <property type="match status" value="1"/>
</dbReference>
<dbReference type="SUPFAM" id="SSF51283">
    <property type="entry name" value="dUTPase-like"/>
    <property type="match status" value="1"/>
</dbReference>
<reference key="1">
    <citation type="journal article" date="2010" name="Genome Biol. Evol.">
        <title>Continuing evolution of Burkholderia mallei through genome reduction and large-scale rearrangements.</title>
        <authorList>
            <person name="Losada L."/>
            <person name="Ronning C.M."/>
            <person name="DeShazer D."/>
            <person name="Woods D."/>
            <person name="Fedorova N."/>
            <person name="Kim H.S."/>
            <person name="Shabalina S.A."/>
            <person name="Pearson T.R."/>
            <person name="Brinkac L."/>
            <person name="Tan P."/>
            <person name="Nandi T."/>
            <person name="Crabtree J."/>
            <person name="Badger J."/>
            <person name="Beckstrom-Sternberg S."/>
            <person name="Saqib M."/>
            <person name="Schutzer S.E."/>
            <person name="Keim P."/>
            <person name="Nierman W.C."/>
        </authorList>
    </citation>
    <scope>NUCLEOTIDE SEQUENCE [LARGE SCALE GENOMIC DNA]</scope>
    <source>
        <strain>1710b</strain>
    </source>
</reference>
<organism>
    <name type="scientific">Burkholderia pseudomallei (strain 1710b)</name>
    <dbReference type="NCBI Taxonomy" id="320372"/>
    <lineage>
        <taxon>Bacteria</taxon>
        <taxon>Pseudomonadati</taxon>
        <taxon>Pseudomonadota</taxon>
        <taxon>Betaproteobacteria</taxon>
        <taxon>Burkholderiales</taxon>
        <taxon>Burkholderiaceae</taxon>
        <taxon>Burkholderia</taxon>
        <taxon>pseudomallei group</taxon>
    </lineage>
</organism>
<name>DUT_BURP1</name>
<gene>
    <name evidence="1" type="primary">dut</name>
    <name type="ordered locus">BURPS1710b_1119</name>
</gene>
<accession>Q3JV72</accession>
<feature type="chain" id="PRO_0000231402" description="Deoxyuridine 5'-triphosphate nucleotidohydrolase">
    <location>
        <begin position="1"/>
        <end position="148"/>
    </location>
</feature>
<feature type="binding site" evidence="1">
    <location>
        <begin position="67"/>
        <end position="69"/>
    </location>
    <ligand>
        <name>substrate</name>
    </ligand>
</feature>
<feature type="binding site" evidence="1">
    <location>
        <position position="80"/>
    </location>
    <ligand>
        <name>substrate</name>
    </ligand>
</feature>
<feature type="binding site" evidence="1">
    <location>
        <begin position="84"/>
        <end position="86"/>
    </location>
    <ligand>
        <name>substrate</name>
    </ligand>
</feature>
<feature type="binding site" evidence="1">
    <location>
        <position position="94"/>
    </location>
    <ligand>
        <name>substrate</name>
    </ligand>
</feature>